<dbReference type="EC" id="2.1.1.228" evidence="1"/>
<dbReference type="EMBL" id="CP000728">
    <property type="protein sequence ID" value="ABS40302.1"/>
    <property type="molecule type" value="Genomic_DNA"/>
</dbReference>
<dbReference type="RefSeq" id="WP_012100390.1">
    <property type="nucleotide sequence ID" value="NC_009699.1"/>
</dbReference>
<dbReference type="SMR" id="A7GG33"/>
<dbReference type="KEGG" id="cbf:CLI_2501"/>
<dbReference type="HOGENOM" id="CLU_047363_0_1_9"/>
<dbReference type="Proteomes" id="UP000002410">
    <property type="component" value="Chromosome"/>
</dbReference>
<dbReference type="GO" id="GO:0005829">
    <property type="term" value="C:cytosol"/>
    <property type="evidence" value="ECO:0007669"/>
    <property type="project" value="TreeGrafter"/>
</dbReference>
<dbReference type="GO" id="GO:0052906">
    <property type="term" value="F:tRNA (guanine(37)-N1)-methyltransferase activity"/>
    <property type="evidence" value="ECO:0007669"/>
    <property type="project" value="UniProtKB-UniRule"/>
</dbReference>
<dbReference type="GO" id="GO:0002939">
    <property type="term" value="P:tRNA N1-guanine methylation"/>
    <property type="evidence" value="ECO:0007669"/>
    <property type="project" value="TreeGrafter"/>
</dbReference>
<dbReference type="CDD" id="cd18080">
    <property type="entry name" value="TrmD-like"/>
    <property type="match status" value="1"/>
</dbReference>
<dbReference type="FunFam" id="1.10.1270.20:FF:000001">
    <property type="entry name" value="tRNA (guanine-N(1)-)-methyltransferase"/>
    <property type="match status" value="1"/>
</dbReference>
<dbReference type="FunFam" id="3.40.1280.10:FF:000001">
    <property type="entry name" value="tRNA (guanine-N(1)-)-methyltransferase"/>
    <property type="match status" value="1"/>
</dbReference>
<dbReference type="Gene3D" id="3.40.1280.10">
    <property type="match status" value="1"/>
</dbReference>
<dbReference type="Gene3D" id="1.10.1270.20">
    <property type="entry name" value="tRNA(m1g37)methyltransferase, domain 2"/>
    <property type="match status" value="1"/>
</dbReference>
<dbReference type="HAMAP" id="MF_00605">
    <property type="entry name" value="TrmD"/>
    <property type="match status" value="1"/>
</dbReference>
<dbReference type="InterPro" id="IPR029028">
    <property type="entry name" value="Alpha/beta_knot_MTases"/>
</dbReference>
<dbReference type="InterPro" id="IPR023148">
    <property type="entry name" value="tRNA_m1G_MeTrfase_C_sf"/>
</dbReference>
<dbReference type="InterPro" id="IPR002649">
    <property type="entry name" value="tRNA_m1G_MeTrfase_TrmD"/>
</dbReference>
<dbReference type="InterPro" id="IPR029026">
    <property type="entry name" value="tRNA_m1G_MTases_N"/>
</dbReference>
<dbReference type="InterPro" id="IPR016009">
    <property type="entry name" value="tRNA_MeTrfase_TRMD/TRM10"/>
</dbReference>
<dbReference type="NCBIfam" id="NF000648">
    <property type="entry name" value="PRK00026.1"/>
    <property type="match status" value="1"/>
</dbReference>
<dbReference type="NCBIfam" id="TIGR00088">
    <property type="entry name" value="trmD"/>
    <property type="match status" value="1"/>
</dbReference>
<dbReference type="PANTHER" id="PTHR46417">
    <property type="entry name" value="TRNA (GUANINE-N(1)-)-METHYLTRANSFERASE"/>
    <property type="match status" value="1"/>
</dbReference>
<dbReference type="PANTHER" id="PTHR46417:SF1">
    <property type="entry name" value="TRNA (GUANINE-N(1)-)-METHYLTRANSFERASE"/>
    <property type="match status" value="1"/>
</dbReference>
<dbReference type="Pfam" id="PF01746">
    <property type="entry name" value="tRNA_m1G_MT"/>
    <property type="match status" value="1"/>
</dbReference>
<dbReference type="PIRSF" id="PIRSF000386">
    <property type="entry name" value="tRNA_mtase"/>
    <property type="match status" value="1"/>
</dbReference>
<dbReference type="SUPFAM" id="SSF75217">
    <property type="entry name" value="alpha/beta knot"/>
    <property type="match status" value="1"/>
</dbReference>
<protein>
    <recommendedName>
        <fullName evidence="1">tRNA (guanine-N(1)-)-methyltransferase</fullName>
        <ecNumber evidence="1">2.1.1.228</ecNumber>
    </recommendedName>
    <alternativeName>
        <fullName evidence="1">M1G-methyltransferase</fullName>
    </alternativeName>
    <alternativeName>
        <fullName evidence="1">tRNA [GM37] methyltransferase</fullName>
    </alternativeName>
</protein>
<evidence type="ECO:0000255" key="1">
    <source>
        <dbReference type="HAMAP-Rule" id="MF_00605"/>
    </source>
</evidence>
<feature type="chain" id="PRO_1000006472" description="tRNA (guanine-N(1)-)-methyltransferase">
    <location>
        <begin position="1"/>
        <end position="240"/>
    </location>
</feature>
<feature type="binding site" evidence="1">
    <location>
        <position position="110"/>
    </location>
    <ligand>
        <name>S-adenosyl-L-methionine</name>
        <dbReference type="ChEBI" id="CHEBI:59789"/>
    </ligand>
</feature>
<feature type="binding site" evidence="1">
    <location>
        <begin position="129"/>
        <end position="134"/>
    </location>
    <ligand>
        <name>S-adenosyl-L-methionine</name>
        <dbReference type="ChEBI" id="CHEBI:59789"/>
    </ligand>
</feature>
<proteinExistence type="inferred from homology"/>
<organism>
    <name type="scientific">Clostridium botulinum (strain Langeland / NCTC 10281 / Type F)</name>
    <dbReference type="NCBI Taxonomy" id="441772"/>
    <lineage>
        <taxon>Bacteria</taxon>
        <taxon>Bacillati</taxon>
        <taxon>Bacillota</taxon>
        <taxon>Clostridia</taxon>
        <taxon>Eubacteriales</taxon>
        <taxon>Clostridiaceae</taxon>
        <taxon>Clostridium</taxon>
    </lineage>
</organism>
<name>TRMD_CLOBL</name>
<keyword id="KW-0963">Cytoplasm</keyword>
<keyword id="KW-0489">Methyltransferase</keyword>
<keyword id="KW-0949">S-adenosyl-L-methionine</keyword>
<keyword id="KW-0808">Transferase</keyword>
<keyword id="KW-0819">tRNA processing</keyword>
<comment type="function">
    <text evidence="1">Specifically methylates guanosine-37 in various tRNAs.</text>
</comment>
<comment type="catalytic activity">
    <reaction evidence="1">
        <text>guanosine(37) in tRNA + S-adenosyl-L-methionine = N(1)-methylguanosine(37) in tRNA + S-adenosyl-L-homocysteine + H(+)</text>
        <dbReference type="Rhea" id="RHEA:36899"/>
        <dbReference type="Rhea" id="RHEA-COMP:10145"/>
        <dbReference type="Rhea" id="RHEA-COMP:10147"/>
        <dbReference type="ChEBI" id="CHEBI:15378"/>
        <dbReference type="ChEBI" id="CHEBI:57856"/>
        <dbReference type="ChEBI" id="CHEBI:59789"/>
        <dbReference type="ChEBI" id="CHEBI:73542"/>
        <dbReference type="ChEBI" id="CHEBI:74269"/>
        <dbReference type="EC" id="2.1.1.228"/>
    </reaction>
</comment>
<comment type="subunit">
    <text evidence="1">Homodimer.</text>
</comment>
<comment type="subcellular location">
    <subcellularLocation>
        <location evidence="1">Cytoplasm</location>
    </subcellularLocation>
</comment>
<comment type="similarity">
    <text evidence="1">Belongs to the RNA methyltransferase TrmD family.</text>
</comment>
<reference key="1">
    <citation type="submission" date="2007-06" db="EMBL/GenBank/DDBJ databases">
        <authorList>
            <person name="Brinkac L.M."/>
            <person name="Daugherty S."/>
            <person name="Dodson R.J."/>
            <person name="Madupu R."/>
            <person name="Brown J.L."/>
            <person name="Bruce D."/>
            <person name="Detter C."/>
            <person name="Munk C."/>
            <person name="Smith L.A."/>
            <person name="Smith T.J."/>
            <person name="White O."/>
            <person name="Brettin T.S."/>
        </authorList>
    </citation>
    <scope>NUCLEOTIDE SEQUENCE [LARGE SCALE GENOMIC DNA]</scope>
    <source>
        <strain>Langeland / NCTC 10281 / Type F</strain>
    </source>
</reference>
<accession>A7GG33</accession>
<sequence>MRIDVLTLFPEMFSIFNHSIIGRAIEKEILKINTVNIRDYTIDKHKKVDDYPYGGGAGMVMAAQPIVDSIKTVKKENKGKVIFLGPKGKTFNQNLAKELAKEEELIFLCGHYEGIDERAYEYIDMEISLGDFVLTGGEMACIPIVDSICRLVDGVLKSSESYEDESFYNGLLEYPQYTRPATYEGKSVPEVLLSGHHENIKKWRKAKSLIITNKVRPDLFKKYKLTEEDKKILKDFNKKL</sequence>
<gene>
    <name evidence="1" type="primary">trmD</name>
    <name type="ordered locus">CLI_2501</name>
</gene>